<proteinExistence type="inferred from homology"/>
<dbReference type="EMBL" id="CP000319">
    <property type="protein sequence ID" value="ABE63148.1"/>
    <property type="molecule type" value="Genomic_DNA"/>
</dbReference>
<dbReference type="RefSeq" id="WP_011510823.1">
    <property type="nucleotide sequence ID" value="NC_007964.1"/>
</dbReference>
<dbReference type="SMR" id="Q1QKU9"/>
<dbReference type="STRING" id="323097.Nham_2356"/>
<dbReference type="KEGG" id="nha:Nham_2356"/>
<dbReference type="eggNOG" id="COG0238">
    <property type="taxonomic scope" value="Bacteria"/>
</dbReference>
<dbReference type="HOGENOM" id="CLU_148710_2_3_5"/>
<dbReference type="OrthoDB" id="9812008at2"/>
<dbReference type="Proteomes" id="UP000001953">
    <property type="component" value="Chromosome"/>
</dbReference>
<dbReference type="GO" id="GO:0022627">
    <property type="term" value="C:cytosolic small ribosomal subunit"/>
    <property type="evidence" value="ECO:0007669"/>
    <property type="project" value="TreeGrafter"/>
</dbReference>
<dbReference type="GO" id="GO:0070181">
    <property type="term" value="F:small ribosomal subunit rRNA binding"/>
    <property type="evidence" value="ECO:0007669"/>
    <property type="project" value="TreeGrafter"/>
</dbReference>
<dbReference type="GO" id="GO:0003735">
    <property type="term" value="F:structural constituent of ribosome"/>
    <property type="evidence" value="ECO:0007669"/>
    <property type="project" value="InterPro"/>
</dbReference>
<dbReference type="GO" id="GO:0006412">
    <property type="term" value="P:translation"/>
    <property type="evidence" value="ECO:0007669"/>
    <property type="project" value="UniProtKB-UniRule"/>
</dbReference>
<dbReference type="FunFam" id="4.10.640.10:FF:000006">
    <property type="entry name" value="30S ribosomal protein S18"/>
    <property type="match status" value="1"/>
</dbReference>
<dbReference type="Gene3D" id="4.10.640.10">
    <property type="entry name" value="Ribosomal protein S18"/>
    <property type="match status" value="1"/>
</dbReference>
<dbReference type="HAMAP" id="MF_00270">
    <property type="entry name" value="Ribosomal_bS18"/>
    <property type="match status" value="1"/>
</dbReference>
<dbReference type="InterPro" id="IPR001648">
    <property type="entry name" value="Ribosomal_bS18"/>
</dbReference>
<dbReference type="InterPro" id="IPR018275">
    <property type="entry name" value="Ribosomal_bS18_CS"/>
</dbReference>
<dbReference type="InterPro" id="IPR036870">
    <property type="entry name" value="Ribosomal_bS18_sf"/>
</dbReference>
<dbReference type="NCBIfam" id="TIGR00165">
    <property type="entry name" value="S18"/>
    <property type="match status" value="1"/>
</dbReference>
<dbReference type="PANTHER" id="PTHR13479">
    <property type="entry name" value="30S RIBOSOMAL PROTEIN S18"/>
    <property type="match status" value="1"/>
</dbReference>
<dbReference type="PANTHER" id="PTHR13479:SF40">
    <property type="entry name" value="SMALL RIBOSOMAL SUBUNIT PROTEIN BS18M"/>
    <property type="match status" value="1"/>
</dbReference>
<dbReference type="Pfam" id="PF01084">
    <property type="entry name" value="Ribosomal_S18"/>
    <property type="match status" value="1"/>
</dbReference>
<dbReference type="PRINTS" id="PR00974">
    <property type="entry name" value="RIBOSOMALS18"/>
</dbReference>
<dbReference type="SUPFAM" id="SSF46911">
    <property type="entry name" value="Ribosomal protein S18"/>
    <property type="match status" value="1"/>
</dbReference>
<dbReference type="PROSITE" id="PS00057">
    <property type="entry name" value="RIBOSOMAL_S18"/>
    <property type="match status" value="1"/>
</dbReference>
<comment type="function">
    <text evidence="1">Binds as a heterodimer with protein bS6 to the central domain of the 16S rRNA, where it helps stabilize the platform of the 30S subunit.</text>
</comment>
<comment type="subunit">
    <text evidence="1">Part of the 30S ribosomal subunit. Forms a tight heterodimer with protein bS6.</text>
</comment>
<comment type="similarity">
    <text evidence="1">Belongs to the bacterial ribosomal protein bS18 family.</text>
</comment>
<evidence type="ECO:0000255" key="1">
    <source>
        <dbReference type="HAMAP-Rule" id="MF_00270"/>
    </source>
</evidence>
<evidence type="ECO:0000305" key="2"/>
<name>RS18_NITHX</name>
<sequence>MADAGARRPFFRRRKTCPFTGANAPKIDYKDSKLLMRYISERGKIVPSRITAVSAKKQRELARAVKRARFLGLLPYVIR</sequence>
<reference key="1">
    <citation type="submission" date="2006-03" db="EMBL/GenBank/DDBJ databases">
        <title>Complete sequence of chromosome of Nitrobacter hamburgensis X14.</title>
        <authorList>
            <consortium name="US DOE Joint Genome Institute"/>
            <person name="Copeland A."/>
            <person name="Lucas S."/>
            <person name="Lapidus A."/>
            <person name="Barry K."/>
            <person name="Detter J.C."/>
            <person name="Glavina del Rio T."/>
            <person name="Hammon N."/>
            <person name="Israni S."/>
            <person name="Dalin E."/>
            <person name="Tice H."/>
            <person name="Pitluck S."/>
            <person name="Chain P."/>
            <person name="Malfatti S."/>
            <person name="Shin M."/>
            <person name="Vergez L."/>
            <person name="Schmutz J."/>
            <person name="Larimer F."/>
            <person name="Land M."/>
            <person name="Hauser L."/>
            <person name="Kyrpides N."/>
            <person name="Ivanova N."/>
            <person name="Ward B."/>
            <person name="Arp D."/>
            <person name="Klotz M."/>
            <person name="Stein L."/>
            <person name="O'Mullan G."/>
            <person name="Starkenburg S."/>
            <person name="Sayavedra L."/>
            <person name="Poret-Peterson A.T."/>
            <person name="Gentry M.E."/>
            <person name="Bruce D."/>
            <person name="Richardson P."/>
        </authorList>
    </citation>
    <scope>NUCLEOTIDE SEQUENCE [LARGE SCALE GENOMIC DNA]</scope>
    <source>
        <strain>DSM 10229 / NCIMB 13809 / X14</strain>
    </source>
</reference>
<organism>
    <name type="scientific">Nitrobacter hamburgensis (strain DSM 10229 / NCIMB 13809 / X14)</name>
    <dbReference type="NCBI Taxonomy" id="323097"/>
    <lineage>
        <taxon>Bacteria</taxon>
        <taxon>Pseudomonadati</taxon>
        <taxon>Pseudomonadota</taxon>
        <taxon>Alphaproteobacteria</taxon>
        <taxon>Hyphomicrobiales</taxon>
        <taxon>Nitrobacteraceae</taxon>
        <taxon>Nitrobacter</taxon>
    </lineage>
</organism>
<accession>Q1QKU9</accession>
<gene>
    <name evidence="1" type="primary">rpsR</name>
    <name type="ordered locus">Nham_2356</name>
</gene>
<feature type="chain" id="PRO_1000003545" description="Small ribosomal subunit protein bS18">
    <location>
        <begin position="1"/>
        <end position="79"/>
    </location>
</feature>
<keyword id="KW-1185">Reference proteome</keyword>
<keyword id="KW-0687">Ribonucleoprotein</keyword>
<keyword id="KW-0689">Ribosomal protein</keyword>
<keyword id="KW-0694">RNA-binding</keyword>
<keyword id="KW-0699">rRNA-binding</keyword>
<protein>
    <recommendedName>
        <fullName evidence="1">Small ribosomal subunit protein bS18</fullName>
    </recommendedName>
    <alternativeName>
        <fullName evidence="2">30S ribosomal protein S18</fullName>
    </alternativeName>
</protein>